<keyword id="KW-0963">Cytoplasm</keyword>
<keyword id="KW-1185">Reference proteome</keyword>
<organism>
    <name type="scientific">Vibrio cholerae serotype O1 (strain ATCC 39315 / El Tor Inaba N16961)</name>
    <dbReference type="NCBI Taxonomy" id="243277"/>
    <lineage>
        <taxon>Bacteria</taxon>
        <taxon>Pseudomonadati</taxon>
        <taxon>Pseudomonadota</taxon>
        <taxon>Gammaproteobacteria</taxon>
        <taxon>Vibrionales</taxon>
        <taxon>Vibrionaceae</taxon>
        <taxon>Vibrio</taxon>
    </lineage>
</organism>
<proteinExistence type="inferred from homology"/>
<evidence type="ECO:0000255" key="1">
    <source>
        <dbReference type="HAMAP-Rule" id="MF_00413"/>
    </source>
</evidence>
<gene>
    <name evidence="1" type="primary">tusA</name>
    <name type="ordered locus">VC_0024</name>
</gene>
<accession>Q9KVW4</accession>
<comment type="function">
    <text evidence="1">Sulfur carrier protein which probably makes part of a sulfur-relay system.</text>
</comment>
<comment type="subcellular location">
    <subcellularLocation>
        <location evidence="1">Cytoplasm</location>
    </subcellularLocation>
</comment>
<comment type="similarity">
    <text evidence="1">Belongs to the sulfur carrier protein TusA family.</text>
</comment>
<reference key="1">
    <citation type="journal article" date="2000" name="Nature">
        <title>DNA sequence of both chromosomes of the cholera pathogen Vibrio cholerae.</title>
        <authorList>
            <person name="Heidelberg J.F."/>
            <person name="Eisen J.A."/>
            <person name="Nelson W.C."/>
            <person name="Clayton R.A."/>
            <person name="Gwinn M.L."/>
            <person name="Dodson R.J."/>
            <person name="Haft D.H."/>
            <person name="Hickey E.K."/>
            <person name="Peterson J.D."/>
            <person name="Umayam L.A."/>
            <person name="Gill S.R."/>
            <person name="Nelson K.E."/>
            <person name="Read T.D."/>
            <person name="Tettelin H."/>
            <person name="Richardson D.L."/>
            <person name="Ermolaeva M.D."/>
            <person name="Vamathevan J.J."/>
            <person name="Bass S."/>
            <person name="Qin H."/>
            <person name="Dragoi I."/>
            <person name="Sellers P."/>
            <person name="McDonald L.A."/>
            <person name="Utterback T.R."/>
            <person name="Fleischmann R.D."/>
            <person name="Nierman W.C."/>
            <person name="White O."/>
            <person name="Salzberg S.L."/>
            <person name="Smith H.O."/>
            <person name="Colwell R.R."/>
            <person name="Mekalanos J.J."/>
            <person name="Venter J.C."/>
            <person name="Fraser C.M."/>
        </authorList>
    </citation>
    <scope>NUCLEOTIDE SEQUENCE [LARGE SCALE GENOMIC DNA]</scope>
    <source>
        <strain>ATCC 39315 / El Tor Inaba N16961</strain>
    </source>
</reference>
<protein>
    <recommendedName>
        <fullName evidence="1">Sulfur carrier protein TusA</fullName>
    </recommendedName>
</protein>
<name>TUSA_VIBCH</name>
<dbReference type="EMBL" id="AE003852">
    <property type="protein sequence ID" value="AAF93202.1"/>
    <property type="molecule type" value="Genomic_DNA"/>
</dbReference>
<dbReference type="PIR" id="B82374">
    <property type="entry name" value="B82374"/>
</dbReference>
<dbReference type="RefSeq" id="NP_229683.1">
    <property type="nucleotide sequence ID" value="NC_002505.1"/>
</dbReference>
<dbReference type="RefSeq" id="WP_000143763.1">
    <property type="nucleotide sequence ID" value="NZ_LT906614.1"/>
</dbReference>
<dbReference type="SMR" id="Q9KVW4"/>
<dbReference type="STRING" id="243277.VC_0024"/>
<dbReference type="DNASU" id="2614869"/>
<dbReference type="EnsemblBacteria" id="AAF93202">
    <property type="protein sequence ID" value="AAF93202"/>
    <property type="gene ID" value="VC_0024"/>
</dbReference>
<dbReference type="GeneID" id="69721180"/>
<dbReference type="KEGG" id="vch:VC_0024"/>
<dbReference type="PATRIC" id="fig|243277.26.peg.23"/>
<dbReference type="eggNOG" id="COG0425">
    <property type="taxonomic scope" value="Bacteria"/>
</dbReference>
<dbReference type="HOGENOM" id="CLU_165255_5_1_6"/>
<dbReference type="Proteomes" id="UP000000584">
    <property type="component" value="Chromosome 1"/>
</dbReference>
<dbReference type="GO" id="GO:0005737">
    <property type="term" value="C:cytoplasm"/>
    <property type="evidence" value="ECO:0007669"/>
    <property type="project" value="UniProtKB-SubCell"/>
</dbReference>
<dbReference type="GO" id="GO:0097163">
    <property type="term" value="F:sulfur carrier activity"/>
    <property type="evidence" value="ECO:0007669"/>
    <property type="project" value="UniProtKB-UniRule"/>
</dbReference>
<dbReference type="GO" id="GO:0002143">
    <property type="term" value="P:tRNA wobble position uridine thiolation"/>
    <property type="evidence" value="ECO:0007669"/>
    <property type="project" value="InterPro"/>
</dbReference>
<dbReference type="Gene3D" id="3.30.110.40">
    <property type="entry name" value="TusA-like domain"/>
    <property type="match status" value="1"/>
</dbReference>
<dbReference type="HAMAP" id="MF_00413">
    <property type="entry name" value="Thiourid_synth_A"/>
    <property type="match status" value="1"/>
</dbReference>
<dbReference type="InterPro" id="IPR022931">
    <property type="entry name" value="Sulphur_carrier_TusA"/>
</dbReference>
<dbReference type="InterPro" id="IPR001455">
    <property type="entry name" value="TusA-like"/>
</dbReference>
<dbReference type="InterPro" id="IPR036868">
    <property type="entry name" value="TusA-like_sf"/>
</dbReference>
<dbReference type="NCBIfam" id="NF001423">
    <property type="entry name" value="PRK00299.1"/>
    <property type="match status" value="1"/>
</dbReference>
<dbReference type="PANTHER" id="PTHR33279:SF2">
    <property type="entry name" value="SULFUR CARRIER PROTEIN TUSA"/>
    <property type="match status" value="1"/>
</dbReference>
<dbReference type="PANTHER" id="PTHR33279">
    <property type="entry name" value="SULFUR CARRIER PROTEIN YEDF-RELATED"/>
    <property type="match status" value="1"/>
</dbReference>
<dbReference type="Pfam" id="PF01206">
    <property type="entry name" value="TusA"/>
    <property type="match status" value="1"/>
</dbReference>
<dbReference type="SUPFAM" id="SSF64307">
    <property type="entry name" value="SirA-like"/>
    <property type="match status" value="1"/>
</dbReference>
<dbReference type="PROSITE" id="PS01148">
    <property type="entry name" value="UPF0033"/>
    <property type="match status" value="1"/>
</dbReference>
<sequence length="82" mass="9279">MTFNPNIATHTLEAEGLRCPEPVMMVRKTIRTMLDGEVLLVTADDPSTTRDIPSFCRFMDHQLLGAQIDQLPYQYLIKKGLA</sequence>
<feature type="chain" id="PRO_0000159055" description="Sulfur carrier protein TusA">
    <location>
        <begin position="1"/>
        <end position="82"/>
    </location>
</feature>
<feature type="active site" description="Cysteine persulfide intermediate" evidence="1">
    <location>
        <position position="19"/>
    </location>
</feature>